<accession>A6LSF6</accession>
<comment type="function">
    <text evidence="1">Catalyzes the attachment of alanine to tRNA(Ala) in a two-step reaction: alanine is first activated by ATP to form Ala-AMP and then transferred to the acceptor end of tRNA(Ala). Also edits incorrectly charged Ser-tRNA(Ala) and Gly-tRNA(Ala) via its editing domain.</text>
</comment>
<comment type="catalytic activity">
    <reaction evidence="1">
        <text>tRNA(Ala) + L-alanine + ATP = L-alanyl-tRNA(Ala) + AMP + diphosphate</text>
        <dbReference type="Rhea" id="RHEA:12540"/>
        <dbReference type="Rhea" id="RHEA-COMP:9657"/>
        <dbReference type="Rhea" id="RHEA-COMP:9923"/>
        <dbReference type="ChEBI" id="CHEBI:30616"/>
        <dbReference type="ChEBI" id="CHEBI:33019"/>
        <dbReference type="ChEBI" id="CHEBI:57972"/>
        <dbReference type="ChEBI" id="CHEBI:78442"/>
        <dbReference type="ChEBI" id="CHEBI:78497"/>
        <dbReference type="ChEBI" id="CHEBI:456215"/>
        <dbReference type="EC" id="6.1.1.7"/>
    </reaction>
</comment>
<comment type="cofactor">
    <cofactor evidence="1">
        <name>Zn(2+)</name>
        <dbReference type="ChEBI" id="CHEBI:29105"/>
    </cofactor>
    <text evidence="1">Binds 1 zinc ion per subunit.</text>
</comment>
<comment type="subcellular location">
    <subcellularLocation>
        <location evidence="1">Cytoplasm</location>
    </subcellularLocation>
</comment>
<comment type="domain">
    <text evidence="1">Consists of three domains; the N-terminal catalytic domain, the editing domain and the C-terminal C-Ala domain. The editing domain removes incorrectly charged amino acids, while the C-Ala domain, along with tRNA(Ala), serves as a bridge to cooperatively bring together the editing and aminoacylation centers thus stimulating deacylation of misacylated tRNAs.</text>
</comment>
<comment type="similarity">
    <text evidence="1">Belongs to the class-II aminoacyl-tRNA synthetase family.</text>
</comment>
<keyword id="KW-0030">Aminoacyl-tRNA synthetase</keyword>
<keyword id="KW-0067">ATP-binding</keyword>
<keyword id="KW-0963">Cytoplasm</keyword>
<keyword id="KW-0436">Ligase</keyword>
<keyword id="KW-0479">Metal-binding</keyword>
<keyword id="KW-0547">Nucleotide-binding</keyword>
<keyword id="KW-0648">Protein biosynthesis</keyword>
<keyword id="KW-0694">RNA-binding</keyword>
<keyword id="KW-0820">tRNA-binding</keyword>
<keyword id="KW-0862">Zinc</keyword>
<feature type="chain" id="PRO_0000347558" description="Alanine--tRNA ligase">
    <location>
        <begin position="1"/>
        <end position="879"/>
    </location>
</feature>
<feature type="binding site" evidence="1">
    <location>
        <position position="566"/>
    </location>
    <ligand>
        <name>Zn(2+)</name>
        <dbReference type="ChEBI" id="CHEBI:29105"/>
    </ligand>
</feature>
<feature type="binding site" evidence="1">
    <location>
        <position position="570"/>
    </location>
    <ligand>
        <name>Zn(2+)</name>
        <dbReference type="ChEBI" id="CHEBI:29105"/>
    </ligand>
</feature>
<feature type="binding site" evidence="1">
    <location>
        <position position="668"/>
    </location>
    <ligand>
        <name>Zn(2+)</name>
        <dbReference type="ChEBI" id="CHEBI:29105"/>
    </ligand>
</feature>
<feature type="binding site" evidence="1">
    <location>
        <position position="672"/>
    </location>
    <ligand>
        <name>Zn(2+)</name>
        <dbReference type="ChEBI" id="CHEBI:29105"/>
    </ligand>
</feature>
<sequence>MKFMKTNDLREAYLKFFESKDHLRMDSFSLVPKNDKSLLLINAGMAPLKPYFTGLQEPPKRRITTCQKCIRTGDIENVGITSRHGTFFEMLGNFSFADYFKKEIIPWAWEFITEVLELPKDRLYVTIYLDDDEAYEYWTTLTDVDKTHIFRLGKEDNFWEHGAGPCGPCTEIHFNRSEEIPTNADEFVKLADEDKIIEFWNLVFTQFDGDGKGNYEKLANTNIDTGMGLERLATIMQEKNSIFEIDTLENILSEVAKLANVKYGENQKTDISLRLITDHIRSITFMISDDVMPSNEGRGYVLRRLLRRAARHGKTLGIKEAFLCNLCDTVIRDSSEAYPELNSKKEYIKKVIKIEEDKFRETLDSGMEILNGFISELKAKNEKVLSGVDGFKLYDTFGFPMELTKEILEDEGLSLDEDAFHEEMKVQRERARSARKVSNYMGTDVKTLDIIPAEVETVFDGYDNDTLNAEVKVLIEGEDFTDAITEGNKAIIVTDVTPLYAEMGGQIGDTGVIFNDGFKANVLDTKKNIGGKIVHFVEVVSGELKVGDTVTIEVDKVRRENIKKNHTATHLLDKALTEVLGSHVHQAGSYVSNDRLRFDFSHFEAMTEEEINKVEDLVNEAITSVTPVVTEVMDLQEAKNSGAIGIFDDKYADKVRVVSAGEYSKELCGGTHIDNTGKIGLFKIISESGIAAGTRRIEAVIGKEAYKIVNEKKDLLKEISTKLKCSEKELLAKLDQQVKELKEKDKEITALKSKFASMGIDDIVSSSRNVKDINVISYELKDVDSDTLRDVCEKVRDKAPNSIVLLMSANAGKVIICAMATKDAVAKGAHCGKLIKEISSMLGGGGGGRPDMAQAGGKMPEKIQEAIEESYKIVETLAK</sequence>
<proteinExistence type="inferred from homology"/>
<name>SYA_CLOB8</name>
<protein>
    <recommendedName>
        <fullName evidence="1">Alanine--tRNA ligase</fullName>
        <ecNumber evidence="1">6.1.1.7</ecNumber>
    </recommendedName>
    <alternativeName>
        <fullName evidence="1">Alanyl-tRNA synthetase</fullName>
        <shortName evidence="1">AlaRS</shortName>
    </alternativeName>
</protein>
<evidence type="ECO:0000255" key="1">
    <source>
        <dbReference type="HAMAP-Rule" id="MF_00036"/>
    </source>
</evidence>
<organism>
    <name type="scientific">Clostridium beijerinckii (strain ATCC 51743 / NCIMB 8052)</name>
    <name type="common">Clostridium acetobutylicum</name>
    <dbReference type="NCBI Taxonomy" id="290402"/>
    <lineage>
        <taxon>Bacteria</taxon>
        <taxon>Bacillati</taxon>
        <taxon>Bacillota</taxon>
        <taxon>Clostridia</taxon>
        <taxon>Eubacteriales</taxon>
        <taxon>Clostridiaceae</taxon>
        <taxon>Clostridium</taxon>
    </lineage>
</organism>
<dbReference type="EC" id="6.1.1.7" evidence="1"/>
<dbReference type="EMBL" id="CP000721">
    <property type="protein sequence ID" value="ABR33286.1"/>
    <property type="molecule type" value="Genomic_DNA"/>
</dbReference>
<dbReference type="RefSeq" id="WP_011968445.1">
    <property type="nucleotide sequence ID" value="NC_009617.1"/>
</dbReference>
<dbReference type="SMR" id="A6LSF6"/>
<dbReference type="KEGG" id="cbe:Cbei_1104"/>
<dbReference type="eggNOG" id="COG0013">
    <property type="taxonomic scope" value="Bacteria"/>
</dbReference>
<dbReference type="HOGENOM" id="CLU_004485_1_1_9"/>
<dbReference type="Proteomes" id="UP000000565">
    <property type="component" value="Chromosome"/>
</dbReference>
<dbReference type="GO" id="GO:0005829">
    <property type="term" value="C:cytosol"/>
    <property type="evidence" value="ECO:0007669"/>
    <property type="project" value="TreeGrafter"/>
</dbReference>
<dbReference type="GO" id="GO:0004813">
    <property type="term" value="F:alanine-tRNA ligase activity"/>
    <property type="evidence" value="ECO:0007669"/>
    <property type="project" value="UniProtKB-UniRule"/>
</dbReference>
<dbReference type="GO" id="GO:0002161">
    <property type="term" value="F:aminoacyl-tRNA deacylase activity"/>
    <property type="evidence" value="ECO:0007669"/>
    <property type="project" value="TreeGrafter"/>
</dbReference>
<dbReference type="GO" id="GO:0005524">
    <property type="term" value="F:ATP binding"/>
    <property type="evidence" value="ECO:0007669"/>
    <property type="project" value="UniProtKB-UniRule"/>
</dbReference>
<dbReference type="GO" id="GO:0140096">
    <property type="term" value="F:catalytic activity, acting on a protein"/>
    <property type="evidence" value="ECO:0007669"/>
    <property type="project" value="UniProtKB-ARBA"/>
</dbReference>
<dbReference type="GO" id="GO:0016740">
    <property type="term" value="F:transferase activity"/>
    <property type="evidence" value="ECO:0007669"/>
    <property type="project" value="UniProtKB-ARBA"/>
</dbReference>
<dbReference type="GO" id="GO:0000049">
    <property type="term" value="F:tRNA binding"/>
    <property type="evidence" value="ECO:0007669"/>
    <property type="project" value="UniProtKB-KW"/>
</dbReference>
<dbReference type="GO" id="GO:0008270">
    <property type="term" value="F:zinc ion binding"/>
    <property type="evidence" value="ECO:0007669"/>
    <property type="project" value="UniProtKB-UniRule"/>
</dbReference>
<dbReference type="GO" id="GO:0006419">
    <property type="term" value="P:alanyl-tRNA aminoacylation"/>
    <property type="evidence" value="ECO:0007669"/>
    <property type="project" value="UniProtKB-UniRule"/>
</dbReference>
<dbReference type="CDD" id="cd00673">
    <property type="entry name" value="AlaRS_core"/>
    <property type="match status" value="1"/>
</dbReference>
<dbReference type="FunFam" id="3.10.310.40:FF:000001">
    <property type="entry name" value="Alanine--tRNA ligase"/>
    <property type="match status" value="1"/>
</dbReference>
<dbReference type="FunFam" id="3.30.54.20:FF:000001">
    <property type="entry name" value="Alanine--tRNA ligase"/>
    <property type="match status" value="1"/>
</dbReference>
<dbReference type="FunFam" id="3.30.930.10:FF:000046">
    <property type="entry name" value="Alanine--tRNA ligase"/>
    <property type="match status" value="1"/>
</dbReference>
<dbReference type="FunFam" id="3.30.980.10:FF:000004">
    <property type="entry name" value="Alanine--tRNA ligase, cytoplasmic"/>
    <property type="match status" value="1"/>
</dbReference>
<dbReference type="Gene3D" id="2.40.30.130">
    <property type="match status" value="1"/>
</dbReference>
<dbReference type="Gene3D" id="3.10.310.40">
    <property type="match status" value="1"/>
</dbReference>
<dbReference type="Gene3D" id="3.30.54.20">
    <property type="match status" value="1"/>
</dbReference>
<dbReference type="Gene3D" id="6.10.250.550">
    <property type="match status" value="1"/>
</dbReference>
<dbReference type="Gene3D" id="3.30.930.10">
    <property type="entry name" value="Bira Bifunctional Protein, Domain 2"/>
    <property type="match status" value="1"/>
</dbReference>
<dbReference type="Gene3D" id="3.30.980.10">
    <property type="entry name" value="Threonyl-trna Synthetase, Chain A, domain 2"/>
    <property type="match status" value="1"/>
</dbReference>
<dbReference type="HAMAP" id="MF_00036_B">
    <property type="entry name" value="Ala_tRNA_synth_B"/>
    <property type="match status" value="1"/>
</dbReference>
<dbReference type="InterPro" id="IPR045864">
    <property type="entry name" value="aa-tRNA-synth_II/BPL/LPL"/>
</dbReference>
<dbReference type="InterPro" id="IPR002318">
    <property type="entry name" value="Ala-tRNA-lgiase_IIc"/>
</dbReference>
<dbReference type="InterPro" id="IPR018162">
    <property type="entry name" value="Ala-tRNA-ligase_IIc_anticod-bd"/>
</dbReference>
<dbReference type="InterPro" id="IPR018165">
    <property type="entry name" value="Ala-tRNA-synth_IIc_core"/>
</dbReference>
<dbReference type="InterPro" id="IPR018164">
    <property type="entry name" value="Ala-tRNA-synth_IIc_N"/>
</dbReference>
<dbReference type="InterPro" id="IPR050058">
    <property type="entry name" value="Ala-tRNA_ligase"/>
</dbReference>
<dbReference type="InterPro" id="IPR023033">
    <property type="entry name" value="Ala_tRNA_ligase_euk/bac"/>
</dbReference>
<dbReference type="InterPro" id="IPR003156">
    <property type="entry name" value="DHHA1_dom"/>
</dbReference>
<dbReference type="InterPro" id="IPR018163">
    <property type="entry name" value="Thr/Ala-tRNA-synth_IIc_edit"/>
</dbReference>
<dbReference type="InterPro" id="IPR009000">
    <property type="entry name" value="Transl_B-barrel_sf"/>
</dbReference>
<dbReference type="InterPro" id="IPR012947">
    <property type="entry name" value="tRNA_SAD"/>
</dbReference>
<dbReference type="NCBIfam" id="TIGR00344">
    <property type="entry name" value="alaS"/>
    <property type="match status" value="1"/>
</dbReference>
<dbReference type="PANTHER" id="PTHR11777:SF9">
    <property type="entry name" value="ALANINE--TRNA LIGASE, CYTOPLASMIC"/>
    <property type="match status" value="1"/>
</dbReference>
<dbReference type="PANTHER" id="PTHR11777">
    <property type="entry name" value="ALANYL-TRNA SYNTHETASE"/>
    <property type="match status" value="1"/>
</dbReference>
<dbReference type="Pfam" id="PF02272">
    <property type="entry name" value="DHHA1"/>
    <property type="match status" value="1"/>
</dbReference>
<dbReference type="Pfam" id="PF01411">
    <property type="entry name" value="tRNA-synt_2c"/>
    <property type="match status" value="1"/>
</dbReference>
<dbReference type="Pfam" id="PF07973">
    <property type="entry name" value="tRNA_SAD"/>
    <property type="match status" value="1"/>
</dbReference>
<dbReference type="PRINTS" id="PR00980">
    <property type="entry name" value="TRNASYNTHALA"/>
</dbReference>
<dbReference type="SMART" id="SM00863">
    <property type="entry name" value="tRNA_SAD"/>
    <property type="match status" value="1"/>
</dbReference>
<dbReference type="SUPFAM" id="SSF55681">
    <property type="entry name" value="Class II aaRS and biotin synthetases"/>
    <property type="match status" value="1"/>
</dbReference>
<dbReference type="SUPFAM" id="SSF101353">
    <property type="entry name" value="Putative anticodon-binding domain of alanyl-tRNA synthetase (AlaRS)"/>
    <property type="match status" value="1"/>
</dbReference>
<dbReference type="SUPFAM" id="SSF55186">
    <property type="entry name" value="ThrRS/AlaRS common domain"/>
    <property type="match status" value="1"/>
</dbReference>
<dbReference type="SUPFAM" id="SSF50447">
    <property type="entry name" value="Translation proteins"/>
    <property type="match status" value="1"/>
</dbReference>
<dbReference type="PROSITE" id="PS50860">
    <property type="entry name" value="AA_TRNA_LIGASE_II_ALA"/>
    <property type="match status" value="1"/>
</dbReference>
<gene>
    <name evidence="1" type="primary">alaS</name>
    <name type="ordered locus">Cbei_1104</name>
</gene>
<reference key="1">
    <citation type="submission" date="2007-06" db="EMBL/GenBank/DDBJ databases">
        <title>Complete sequence of Clostridium beijerinckii NCIMB 8052.</title>
        <authorList>
            <consortium name="US DOE Joint Genome Institute"/>
            <person name="Copeland A."/>
            <person name="Lucas S."/>
            <person name="Lapidus A."/>
            <person name="Barry K."/>
            <person name="Detter J.C."/>
            <person name="Glavina del Rio T."/>
            <person name="Hammon N."/>
            <person name="Israni S."/>
            <person name="Dalin E."/>
            <person name="Tice H."/>
            <person name="Pitluck S."/>
            <person name="Sims D."/>
            <person name="Brettin T."/>
            <person name="Bruce D."/>
            <person name="Tapia R."/>
            <person name="Brainard J."/>
            <person name="Schmutz J."/>
            <person name="Larimer F."/>
            <person name="Land M."/>
            <person name="Hauser L."/>
            <person name="Kyrpides N."/>
            <person name="Mikhailova N."/>
            <person name="Bennet G."/>
            <person name="Cann I."/>
            <person name="Chen J.-S."/>
            <person name="Contreras A.L."/>
            <person name="Jones D."/>
            <person name="Kashket E."/>
            <person name="Mitchell W."/>
            <person name="Stoddard S."/>
            <person name="Schwarz W."/>
            <person name="Qureshi N."/>
            <person name="Young M."/>
            <person name="Shi Z."/>
            <person name="Ezeji T."/>
            <person name="White B."/>
            <person name="Blaschek H."/>
            <person name="Richardson P."/>
        </authorList>
    </citation>
    <scope>NUCLEOTIDE SEQUENCE [LARGE SCALE GENOMIC DNA]</scope>
    <source>
        <strain>ATCC 51743 / NCIMB 8052</strain>
    </source>
</reference>